<sequence>MKTIGEFNAAHGPEAIGLTDLTAVHWNLEAPRLYEEALRRGEAQLARGGALVATTGSHTGRSPKDKVVVRDAGTENEIWWDNNGSITREQFATLLEDFRAHARGKELFAQDLYGGADPAHRVRARVYTELAWHSLFIRNLLIRPERGELAAYVPELTIIDLPSFQADPVRHGCRSKTVIAIDFAQKIVLIGGSAYAGEMKKSVFTYLNYVLPGAGVMPMHCSANAALDETGDSALFFGLSGTGKTTLSNDSSRKLIGDDEHGWSRDGIFNFEGGCYAKTIRLSRNAEPEIYATTERFGTVMENVVIDPLTRVPDFDDATLTENTRCAYPLDFIANASATGRAGHPKNIVMLTCDAFGVMPPIARLTGAEAMYHFLSGYTAKVAGTERGLTAPEATFSTCFGAPFMPRHPSVYGNLLRALMAEHGVDCWLVNTGWTGGGVGTGRRMPIRVTRRLLSAALDGSLAQTEFRRDPYFGFSVPVEVAGVETQVLSPVETWTNKAAFAETATRLVTMFRENFKRFESHVDADVRAAEPVAAPIAA</sequence>
<name>PCKA_METPB</name>
<feature type="chain" id="PRO_1000125074" description="Phosphoenolpyruvate carboxykinase (ATP)">
    <location>
        <begin position="1"/>
        <end position="539"/>
    </location>
</feature>
<feature type="binding site" evidence="1">
    <location>
        <position position="61"/>
    </location>
    <ligand>
        <name>substrate</name>
    </ligand>
</feature>
<feature type="binding site" evidence="1">
    <location>
        <position position="195"/>
    </location>
    <ligand>
        <name>substrate</name>
    </ligand>
</feature>
<feature type="binding site" evidence="1">
    <location>
        <position position="201"/>
    </location>
    <ligand>
        <name>ATP</name>
        <dbReference type="ChEBI" id="CHEBI:30616"/>
    </ligand>
</feature>
<feature type="binding site" evidence="1">
    <location>
        <position position="201"/>
    </location>
    <ligand>
        <name>Mn(2+)</name>
        <dbReference type="ChEBI" id="CHEBI:29035"/>
    </ligand>
</feature>
<feature type="binding site" evidence="1">
    <location>
        <position position="201"/>
    </location>
    <ligand>
        <name>substrate</name>
    </ligand>
</feature>
<feature type="binding site" evidence="1">
    <location>
        <position position="220"/>
    </location>
    <ligand>
        <name>ATP</name>
        <dbReference type="ChEBI" id="CHEBI:30616"/>
    </ligand>
</feature>
<feature type="binding site" evidence="1">
    <location>
        <position position="220"/>
    </location>
    <ligand>
        <name>Mn(2+)</name>
        <dbReference type="ChEBI" id="CHEBI:29035"/>
    </ligand>
</feature>
<feature type="binding site" evidence="1">
    <location>
        <begin position="238"/>
        <end position="246"/>
    </location>
    <ligand>
        <name>ATP</name>
        <dbReference type="ChEBI" id="CHEBI:30616"/>
    </ligand>
</feature>
<feature type="binding site" evidence="1">
    <location>
        <position position="259"/>
    </location>
    <ligand>
        <name>Mn(2+)</name>
        <dbReference type="ChEBI" id="CHEBI:29035"/>
    </ligand>
</feature>
<feature type="binding site" evidence="1">
    <location>
        <position position="287"/>
    </location>
    <ligand>
        <name>ATP</name>
        <dbReference type="ChEBI" id="CHEBI:30616"/>
    </ligand>
</feature>
<feature type="binding site" evidence="1">
    <location>
        <position position="325"/>
    </location>
    <ligand>
        <name>ATP</name>
        <dbReference type="ChEBI" id="CHEBI:30616"/>
    </ligand>
</feature>
<feature type="binding site" evidence="1">
    <location>
        <position position="325"/>
    </location>
    <ligand>
        <name>substrate</name>
    </ligand>
</feature>
<feature type="binding site" evidence="1">
    <location>
        <position position="450"/>
    </location>
    <ligand>
        <name>ATP</name>
        <dbReference type="ChEBI" id="CHEBI:30616"/>
    </ligand>
</feature>
<reference key="1">
    <citation type="submission" date="2008-04" db="EMBL/GenBank/DDBJ databases">
        <title>Complete sequence of chromosome of Methylobacterium populi BJ001.</title>
        <authorList>
            <consortium name="US DOE Joint Genome Institute"/>
            <person name="Copeland A."/>
            <person name="Lucas S."/>
            <person name="Lapidus A."/>
            <person name="Glavina del Rio T."/>
            <person name="Dalin E."/>
            <person name="Tice H."/>
            <person name="Bruce D."/>
            <person name="Goodwin L."/>
            <person name="Pitluck S."/>
            <person name="Chertkov O."/>
            <person name="Brettin T."/>
            <person name="Detter J.C."/>
            <person name="Han C."/>
            <person name="Kuske C.R."/>
            <person name="Schmutz J."/>
            <person name="Larimer F."/>
            <person name="Land M."/>
            <person name="Hauser L."/>
            <person name="Kyrpides N."/>
            <person name="Mikhailova N."/>
            <person name="Marx C."/>
            <person name="Richardson P."/>
        </authorList>
    </citation>
    <scope>NUCLEOTIDE SEQUENCE [LARGE SCALE GENOMIC DNA]</scope>
    <source>
        <strain>ATCC BAA-705 / NCIMB 13946 / BJ001</strain>
    </source>
</reference>
<protein>
    <recommendedName>
        <fullName evidence="1">Phosphoenolpyruvate carboxykinase (ATP)</fullName>
        <shortName evidence="1">PCK</shortName>
        <shortName evidence="1">PEP carboxykinase</shortName>
        <shortName evidence="1">PEPCK</shortName>
        <ecNumber evidence="1">4.1.1.49</ecNumber>
    </recommendedName>
</protein>
<organism>
    <name type="scientific">Methylorubrum populi (strain ATCC BAA-705 / NCIMB 13946 / BJ001)</name>
    <name type="common">Methylobacterium populi</name>
    <dbReference type="NCBI Taxonomy" id="441620"/>
    <lineage>
        <taxon>Bacteria</taxon>
        <taxon>Pseudomonadati</taxon>
        <taxon>Pseudomonadota</taxon>
        <taxon>Alphaproteobacteria</taxon>
        <taxon>Hyphomicrobiales</taxon>
        <taxon>Methylobacteriaceae</taxon>
        <taxon>Methylorubrum</taxon>
    </lineage>
</organism>
<gene>
    <name evidence="1" type="primary">pckA</name>
    <name type="ordered locus">Mpop_1593</name>
</gene>
<keyword id="KW-0067">ATP-binding</keyword>
<keyword id="KW-0963">Cytoplasm</keyword>
<keyword id="KW-0210">Decarboxylase</keyword>
<keyword id="KW-0312">Gluconeogenesis</keyword>
<keyword id="KW-0456">Lyase</keyword>
<keyword id="KW-0464">Manganese</keyword>
<keyword id="KW-0479">Metal-binding</keyword>
<keyword id="KW-0547">Nucleotide-binding</keyword>
<proteinExistence type="inferred from homology"/>
<comment type="function">
    <text evidence="1">Involved in the gluconeogenesis. Catalyzes the conversion of oxaloacetate (OAA) to phosphoenolpyruvate (PEP) through direct phosphoryl transfer between the nucleoside triphosphate and OAA.</text>
</comment>
<comment type="catalytic activity">
    <reaction evidence="1">
        <text>oxaloacetate + ATP = phosphoenolpyruvate + ADP + CO2</text>
        <dbReference type="Rhea" id="RHEA:18617"/>
        <dbReference type="ChEBI" id="CHEBI:16452"/>
        <dbReference type="ChEBI" id="CHEBI:16526"/>
        <dbReference type="ChEBI" id="CHEBI:30616"/>
        <dbReference type="ChEBI" id="CHEBI:58702"/>
        <dbReference type="ChEBI" id="CHEBI:456216"/>
        <dbReference type="EC" id="4.1.1.49"/>
    </reaction>
</comment>
<comment type="cofactor">
    <cofactor evidence="1">
        <name>Mn(2+)</name>
        <dbReference type="ChEBI" id="CHEBI:29035"/>
    </cofactor>
    <text evidence="1">Binds 1 Mn(2+) ion per subunit.</text>
</comment>
<comment type="pathway">
    <text evidence="1">Carbohydrate biosynthesis; gluconeogenesis.</text>
</comment>
<comment type="subcellular location">
    <subcellularLocation>
        <location evidence="1">Cytoplasm</location>
    </subcellularLocation>
</comment>
<comment type="similarity">
    <text evidence="1">Belongs to the phosphoenolpyruvate carboxykinase (ATP) family.</text>
</comment>
<dbReference type="EC" id="4.1.1.49" evidence="1"/>
<dbReference type="EMBL" id="CP001029">
    <property type="protein sequence ID" value="ACB79757.1"/>
    <property type="molecule type" value="Genomic_DNA"/>
</dbReference>
<dbReference type="RefSeq" id="WP_012453505.1">
    <property type="nucleotide sequence ID" value="NC_010725.1"/>
</dbReference>
<dbReference type="SMR" id="B1ZG99"/>
<dbReference type="STRING" id="441620.Mpop_1593"/>
<dbReference type="KEGG" id="mpo:Mpop_1593"/>
<dbReference type="eggNOG" id="COG1866">
    <property type="taxonomic scope" value="Bacteria"/>
</dbReference>
<dbReference type="HOGENOM" id="CLU_018247_0_1_5"/>
<dbReference type="OrthoDB" id="9806325at2"/>
<dbReference type="UniPathway" id="UPA00138"/>
<dbReference type="Proteomes" id="UP000007136">
    <property type="component" value="Chromosome"/>
</dbReference>
<dbReference type="GO" id="GO:0005829">
    <property type="term" value="C:cytosol"/>
    <property type="evidence" value="ECO:0007669"/>
    <property type="project" value="TreeGrafter"/>
</dbReference>
<dbReference type="GO" id="GO:0005524">
    <property type="term" value="F:ATP binding"/>
    <property type="evidence" value="ECO:0007669"/>
    <property type="project" value="UniProtKB-UniRule"/>
</dbReference>
<dbReference type="GO" id="GO:0046872">
    <property type="term" value="F:metal ion binding"/>
    <property type="evidence" value="ECO:0007669"/>
    <property type="project" value="UniProtKB-KW"/>
</dbReference>
<dbReference type="GO" id="GO:0004612">
    <property type="term" value="F:phosphoenolpyruvate carboxykinase (ATP) activity"/>
    <property type="evidence" value="ECO:0007669"/>
    <property type="project" value="UniProtKB-UniRule"/>
</dbReference>
<dbReference type="GO" id="GO:0006094">
    <property type="term" value="P:gluconeogenesis"/>
    <property type="evidence" value="ECO:0007669"/>
    <property type="project" value="UniProtKB-UniRule"/>
</dbReference>
<dbReference type="Gene3D" id="3.90.228.20">
    <property type="match status" value="1"/>
</dbReference>
<dbReference type="Gene3D" id="3.40.449.10">
    <property type="entry name" value="Phosphoenolpyruvate Carboxykinase, domain 1"/>
    <property type="match status" value="1"/>
</dbReference>
<dbReference type="Gene3D" id="2.170.8.10">
    <property type="entry name" value="Phosphoenolpyruvate Carboxykinase, domain 2"/>
    <property type="match status" value="1"/>
</dbReference>
<dbReference type="HAMAP" id="MF_00453">
    <property type="entry name" value="PEPCK_ATP"/>
    <property type="match status" value="1"/>
</dbReference>
<dbReference type="InterPro" id="IPR001272">
    <property type="entry name" value="PEP_carboxykinase_ATP"/>
</dbReference>
<dbReference type="InterPro" id="IPR013035">
    <property type="entry name" value="PEP_carboxykinase_C"/>
</dbReference>
<dbReference type="InterPro" id="IPR008210">
    <property type="entry name" value="PEP_carboxykinase_N"/>
</dbReference>
<dbReference type="NCBIfam" id="TIGR00224">
    <property type="entry name" value="pckA"/>
    <property type="match status" value="1"/>
</dbReference>
<dbReference type="NCBIfam" id="NF006820">
    <property type="entry name" value="PRK09344.1-2"/>
    <property type="match status" value="1"/>
</dbReference>
<dbReference type="NCBIfam" id="NF006821">
    <property type="entry name" value="PRK09344.1-3"/>
    <property type="match status" value="1"/>
</dbReference>
<dbReference type="NCBIfam" id="NF006822">
    <property type="entry name" value="PRK09344.1-4"/>
    <property type="match status" value="1"/>
</dbReference>
<dbReference type="PANTHER" id="PTHR30031:SF0">
    <property type="entry name" value="PHOSPHOENOLPYRUVATE CARBOXYKINASE (ATP)"/>
    <property type="match status" value="1"/>
</dbReference>
<dbReference type="PANTHER" id="PTHR30031">
    <property type="entry name" value="PHOSPHOENOLPYRUVATE CARBOXYKINASE ATP"/>
    <property type="match status" value="1"/>
</dbReference>
<dbReference type="Pfam" id="PF01293">
    <property type="entry name" value="PEPCK_ATP"/>
    <property type="match status" value="1"/>
</dbReference>
<dbReference type="PIRSF" id="PIRSF006294">
    <property type="entry name" value="PEP_crbxkin"/>
    <property type="match status" value="1"/>
</dbReference>
<dbReference type="SUPFAM" id="SSF68923">
    <property type="entry name" value="PEP carboxykinase N-terminal domain"/>
    <property type="match status" value="1"/>
</dbReference>
<dbReference type="SUPFAM" id="SSF53795">
    <property type="entry name" value="PEP carboxykinase-like"/>
    <property type="match status" value="1"/>
</dbReference>
<evidence type="ECO:0000255" key="1">
    <source>
        <dbReference type="HAMAP-Rule" id="MF_00453"/>
    </source>
</evidence>
<accession>B1ZG99</accession>